<name>RS17_SYNR3</name>
<keyword id="KW-1185">Reference proteome</keyword>
<keyword id="KW-0687">Ribonucleoprotein</keyword>
<keyword id="KW-0689">Ribosomal protein</keyword>
<keyword id="KW-0694">RNA-binding</keyword>
<keyword id="KW-0699">rRNA-binding</keyword>
<accession>A5GVW9</accession>
<comment type="function">
    <text evidence="1">One of the primary rRNA binding proteins, it binds specifically to the 5'-end of 16S ribosomal RNA.</text>
</comment>
<comment type="subunit">
    <text evidence="1">Part of the 30S ribosomal subunit.</text>
</comment>
<comment type="similarity">
    <text evidence="1">Belongs to the universal ribosomal protein uS17 family.</text>
</comment>
<protein>
    <recommendedName>
        <fullName evidence="1">Small ribosomal subunit protein uS17</fullName>
    </recommendedName>
    <alternativeName>
        <fullName evidence="2">30S ribosomal protein S17</fullName>
    </alternativeName>
</protein>
<feature type="chain" id="PRO_1000055038" description="Small ribosomal subunit protein uS17">
    <location>
        <begin position="1"/>
        <end position="83"/>
    </location>
</feature>
<dbReference type="EMBL" id="CT978603">
    <property type="protein sequence ID" value="CAK29028.1"/>
    <property type="molecule type" value="Genomic_DNA"/>
</dbReference>
<dbReference type="SMR" id="A5GVW9"/>
<dbReference type="STRING" id="316278.SynRCC307_2125"/>
<dbReference type="KEGG" id="syr:SynRCC307_2125"/>
<dbReference type="eggNOG" id="COG0186">
    <property type="taxonomic scope" value="Bacteria"/>
</dbReference>
<dbReference type="HOGENOM" id="CLU_073626_1_2_3"/>
<dbReference type="OrthoDB" id="9811714at2"/>
<dbReference type="Proteomes" id="UP000001115">
    <property type="component" value="Chromosome"/>
</dbReference>
<dbReference type="GO" id="GO:0022627">
    <property type="term" value="C:cytosolic small ribosomal subunit"/>
    <property type="evidence" value="ECO:0007669"/>
    <property type="project" value="TreeGrafter"/>
</dbReference>
<dbReference type="GO" id="GO:0019843">
    <property type="term" value="F:rRNA binding"/>
    <property type="evidence" value="ECO:0007669"/>
    <property type="project" value="UniProtKB-UniRule"/>
</dbReference>
<dbReference type="GO" id="GO:0003735">
    <property type="term" value="F:structural constituent of ribosome"/>
    <property type="evidence" value="ECO:0007669"/>
    <property type="project" value="InterPro"/>
</dbReference>
<dbReference type="GO" id="GO:0006412">
    <property type="term" value="P:translation"/>
    <property type="evidence" value="ECO:0007669"/>
    <property type="project" value="UniProtKB-UniRule"/>
</dbReference>
<dbReference type="CDD" id="cd00364">
    <property type="entry name" value="Ribosomal_uS17"/>
    <property type="match status" value="1"/>
</dbReference>
<dbReference type="Gene3D" id="2.40.50.140">
    <property type="entry name" value="Nucleic acid-binding proteins"/>
    <property type="match status" value="1"/>
</dbReference>
<dbReference type="HAMAP" id="MF_01345_B">
    <property type="entry name" value="Ribosomal_uS17_B"/>
    <property type="match status" value="1"/>
</dbReference>
<dbReference type="InterPro" id="IPR012340">
    <property type="entry name" value="NA-bd_OB-fold"/>
</dbReference>
<dbReference type="InterPro" id="IPR000266">
    <property type="entry name" value="Ribosomal_uS17"/>
</dbReference>
<dbReference type="InterPro" id="IPR019984">
    <property type="entry name" value="Ribosomal_uS17_bact/chlr"/>
</dbReference>
<dbReference type="InterPro" id="IPR019979">
    <property type="entry name" value="Ribosomal_uS17_CS"/>
</dbReference>
<dbReference type="NCBIfam" id="NF004123">
    <property type="entry name" value="PRK05610.1"/>
    <property type="match status" value="1"/>
</dbReference>
<dbReference type="NCBIfam" id="TIGR03635">
    <property type="entry name" value="uS17_bact"/>
    <property type="match status" value="1"/>
</dbReference>
<dbReference type="PANTHER" id="PTHR10744">
    <property type="entry name" value="40S RIBOSOMAL PROTEIN S11 FAMILY MEMBER"/>
    <property type="match status" value="1"/>
</dbReference>
<dbReference type="PANTHER" id="PTHR10744:SF1">
    <property type="entry name" value="SMALL RIBOSOMAL SUBUNIT PROTEIN US17M"/>
    <property type="match status" value="1"/>
</dbReference>
<dbReference type="Pfam" id="PF00366">
    <property type="entry name" value="Ribosomal_S17"/>
    <property type="match status" value="1"/>
</dbReference>
<dbReference type="PRINTS" id="PR00973">
    <property type="entry name" value="RIBOSOMALS17"/>
</dbReference>
<dbReference type="SUPFAM" id="SSF50249">
    <property type="entry name" value="Nucleic acid-binding proteins"/>
    <property type="match status" value="1"/>
</dbReference>
<dbReference type="PROSITE" id="PS00056">
    <property type="entry name" value="RIBOSOMAL_S17"/>
    <property type="match status" value="1"/>
</dbReference>
<sequence length="83" mass="9548">MAVKERVGTVVSDKMEKTVVVAVENRFPHPIYKKTVSRTTRYKVHDEDNRCQVGDRVRITETRPLSRSKRWAVAEIMTTKSGS</sequence>
<organism>
    <name type="scientific">Synechococcus sp. (strain RCC307)</name>
    <dbReference type="NCBI Taxonomy" id="316278"/>
    <lineage>
        <taxon>Bacteria</taxon>
        <taxon>Bacillati</taxon>
        <taxon>Cyanobacteriota</taxon>
        <taxon>Cyanophyceae</taxon>
        <taxon>Synechococcales</taxon>
        <taxon>Synechococcaceae</taxon>
        <taxon>Synechococcus</taxon>
    </lineage>
</organism>
<gene>
    <name evidence="1" type="primary">rpsQ</name>
    <name evidence="1" type="synonym">rps17</name>
    <name type="ordered locus">SynRCC307_2125</name>
</gene>
<evidence type="ECO:0000255" key="1">
    <source>
        <dbReference type="HAMAP-Rule" id="MF_01345"/>
    </source>
</evidence>
<evidence type="ECO:0000305" key="2"/>
<reference key="1">
    <citation type="submission" date="2006-05" db="EMBL/GenBank/DDBJ databases">
        <authorList>
            <consortium name="Genoscope"/>
        </authorList>
    </citation>
    <scope>NUCLEOTIDE SEQUENCE [LARGE SCALE GENOMIC DNA]</scope>
    <source>
        <strain>RCC307</strain>
    </source>
</reference>
<proteinExistence type="inferred from homology"/>